<feature type="chain" id="PRO_0000235003" description="Serine hydroxymethyltransferase 2">
    <location>
        <begin position="1"/>
        <end position="417"/>
    </location>
</feature>
<feature type="binding site" evidence="1">
    <location>
        <position position="121"/>
    </location>
    <ligand>
        <name>(6S)-5,6,7,8-tetrahydrofolate</name>
        <dbReference type="ChEBI" id="CHEBI:57453"/>
    </ligand>
</feature>
<feature type="binding site" evidence="1">
    <location>
        <begin position="125"/>
        <end position="127"/>
    </location>
    <ligand>
        <name>(6S)-5,6,7,8-tetrahydrofolate</name>
        <dbReference type="ChEBI" id="CHEBI:57453"/>
    </ligand>
</feature>
<feature type="binding site" evidence="1">
    <location>
        <begin position="355"/>
        <end position="357"/>
    </location>
    <ligand>
        <name>(6S)-5,6,7,8-tetrahydrofolate</name>
        <dbReference type="ChEBI" id="CHEBI:57453"/>
    </ligand>
</feature>
<feature type="site" description="Plays an important role in substrate specificity" evidence="1">
    <location>
        <position position="229"/>
    </location>
</feature>
<feature type="modified residue" description="N6-(pyridoxal phosphate)lysine" evidence="1">
    <location>
        <position position="230"/>
    </location>
</feature>
<reference key="1">
    <citation type="journal article" date="2005" name="Nat. Biotechnol.">
        <title>Complete genome sequence of the plant commensal Pseudomonas fluorescens Pf-5.</title>
        <authorList>
            <person name="Paulsen I.T."/>
            <person name="Press C.M."/>
            <person name="Ravel J."/>
            <person name="Kobayashi D.Y."/>
            <person name="Myers G.S.A."/>
            <person name="Mavrodi D.V."/>
            <person name="DeBoy R.T."/>
            <person name="Seshadri R."/>
            <person name="Ren Q."/>
            <person name="Madupu R."/>
            <person name="Dodson R.J."/>
            <person name="Durkin A.S."/>
            <person name="Brinkac L.M."/>
            <person name="Daugherty S.C."/>
            <person name="Sullivan S.A."/>
            <person name="Rosovitz M.J."/>
            <person name="Gwinn M.L."/>
            <person name="Zhou L."/>
            <person name="Schneider D.J."/>
            <person name="Cartinhour S.W."/>
            <person name="Nelson W.C."/>
            <person name="Weidman J."/>
            <person name="Watkins K."/>
            <person name="Tran K."/>
            <person name="Khouri H."/>
            <person name="Pierson E.A."/>
            <person name="Pierson L.S. III"/>
            <person name="Thomashow L.S."/>
            <person name="Loper J.E."/>
        </authorList>
    </citation>
    <scope>NUCLEOTIDE SEQUENCE [LARGE SCALE GENOMIC DNA]</scope>
    <source>
        <strain>ATCC BAA-477 / NRRL B-23932 / Pf-5</strain>
    </source>
</reference>
<sequence length="417" mass="44807">MFSKQDQIQGYDDALLAAINAEEQRQEDHIELIASENYTSKRVMQAQGSGLTNKYAEGYPGKRYYGGCEHVDKVEALAIERAKQLFGADYANVQPHSGSSANSEVYLALLQAGDTILGMSLAHGGHLTHGAKVSSSGKLYNAVQYGIDTRTGLIDYDEVERLAVEHKPKMIVAGFSAYSKTLDFPRFRQIADKVGALLFVDMAHVAGLVAAGLYPNPLPYADVVTTTTHKTLRGPRGGLILAKANEEIEKKLNAAVFPGAQGGPLMHVIAAKAVCFKEALEPGFKAYQQQVIDNAQAMAGVFIKRGYDVVSGGTDNHLFLVSLIRQGLTGKDADAALGRAHITVNKNAVPNDPQSPFVTSGLRIGTPAVTTRGFKVTQCTELAGWICDILDHLGDADVEANVARQVAALCADFPVYR</sequence>
<accession>Q4K4P6</accession>
<dbReference type="EC" id="2.1.2.1" evidence="1"/>
<dbReference type="EMBL" id="CP000076">
    <property type="protein sequence ID" value="AAY94919.1"/>
    <property type="molecule type" value="Genomic_DNA"/>
</dbReference>
<dbReference type="RefSeq" id="WP_011063904.1">
    <property type="nucleotide sequence ID" value="NC_004129.6"/>
</dbReference>
<dbReference type="SMR" id="Q4K4P6"/>
<dbReference type="STRING" id="220664.PFL_5729"/>
<dbReference type="KEGG" id="pfl:PFL_5729"/>
<dbReference type="PATRIC" id="fig|220664.5.peg.5840"/>
<dbReference type="eggNOG" id="COG0112">
    <property type="taxonomic scope" value="Bacteria"/>
</dbReference>
<dbReference type="HOGENOM" id="CLU_022477_2_1_6"/>
<dbReference type="UniPathway" id="UPA00193"/>
<dbReference type="UniPathway" id="UPA00288">
    <property type="reaction ID" value="UER01023"/>
</dbReference>
<dbReference type="Proteomes" id="UP000008540">
    <property type="component" value="Chromosome"/>
</dbReference>
<dbReference type="GO" id="GO:0005829">
    <property type="term" value="C:cytosol"/>
    <property type="evidence" value="ECO:0007669"/>
    <property type="project" value="TreeGrafter"/>
</dbReference>
<dbReference type="GO" id="GO:0004372">
    <property type="term" value="F:glycine hydroxymethyltransferase activity"/>
    <property type="evidence" value="ECO:0007669"/>
    <property type="project" value="UniProtKB-UniRule"/>
</dbReference>
<dbReference type="GO" id="GO:0030170">
    <property type="term" value="F:pyridoxal phosphate binding"/>
    <property type="evidence" value="ECO:0007669"/>
    <property type="project" value="UniProtKB-UniRule"/>
</dbReference>
<dbReference type="GO" id="GO:0019264">
    <property type="term" value="P:glycine biosynthetic process from serine"/>
    <property type="evidence" value="ECO:0007669"/>
    <property type="project" value="UniProtKB-UniRule"/>
</dbReference>
<dbReference type="GO" id="GO:0035999">
    <property type="term" value="P:tetrahydrofolate interconversion"/>
    <property type="evidence" value="ECO:0007669"/>
    <property type="project" value="UniProtKB-UniRule"/>
</dbReference>
<dbReference type="CDD" id="cd00378">
    <property type="entry name" value="SHMT"/>
    <property type="match status" value="1"/>
</dbReference>
<dbReference type="FunFam" id="3.40.640.10:FF:000001">
    <property type="entry name" value="Serine hydroxymethyltransferase"/>
    <property type="match status" value="1"/>
</dbReference>
<dbReference type="FunFam" id="3.90.1150.10:FF:000003">
    <property type="entry name" value="Serine hydroxymethyltransferase"/>
    <property type="match status" value="1"/>
</dbReference>
<dbReference type="Gene3D" id="3.90.1150.10">
    <property type="entry name" value="Aspartate Aminotransferase, domain 1"/>
    <property type="match status" value="1"/>
</dbReference>
<dbReference type="Gene3D" id="3.40.640.10">
    <property type="entry name" value="Type I PLP-dependent aspartate aminotransferase-like (Major domain)"/>
    <property type="match status" value="1"/>
</dbReference>
<dbReference type="HAMAP" id="MF_00051">
    <property type="entry name" value="SHMT"/>
    <property type="match status" value="1"/>
</dbReference>
<dbReference type="InterPro" id="IPR015424">
    <property type="entry name" value="PyrdxlP-dep_Trfase"/>
</dbReference>
<dbReference type="InterPro" id="IPR015421">
    <property type="entry name" value="PyrdxlP-dep_Trfase_major"/>
</dbReference>
<dbReference type="InterPro" id="IPR015422">
    <property type="entry name" value="PyrdxlP-dep_Trfase_small"/>
</dbReference>
<dbReference type="InterPro" id="IPR001085">
    <property type="entry name" value="Ser_HO-MeTrfase"/>
</dbReference>
<dbReference type="InterPro" id="IPR049943">
    <property type="entry name" value="Ser_HO-MeTrfase-like"/>
</dbReference>
<dbReference type="InterPro" id="IPR019798">
    <property type="entry name" value="Ser_HO-MeTrfase_PLP_BS"/>
</dbReference>
<dbReference type="InterPro" id="IPR039429">
    <property type="entry name" value="SHMT-like_dom"/>
</dbReference>
<dbReference type="NCBIfam" id="NF000586">
    <property type="entry name" value="PRK00011.1"/>
    <property type="match status" value="1"/>
</dbReference>
<dbReference type="PANTHER" id="PTHR11680">
    <property type="entry name" value="SERINE HYDROXYMETHYLTRANSFERASE"/>
    <property type="match status" value="1"/>
</dbReference>
<dbReference type="PANTHER" id="PTHR11680:SF50">
    <property type="entry name" value="SERINE HYDROXYMETHYLTRANSFERASE"/>
    <property type="match status" value="1"/>
</dbReference>
<dbReference type="Pfam" id="PF00464">
    <property type="entry name" value="SHMT"/>
    <property type="match status" value="1"/>
</dbReference>
<dbReference type="PIRSF" id="PIRSF000412">
    <property type="entry name" value="SHMT"/>
    <property type="match status" value="1"/>
</dbReference>
<dbReference type="SUPFAM" id="SSF53383">
    <property type="entry name" value="PLP-dependent transferases"/>
    <property type="match status" value="1"/>
</dbReference>
<dbReference type="PROSITE" id="PS00096">
    <property type="entry name" value="SHMT"/>
    <property type="match status" value="1"/>
</dbReference>
<protein>
    <recommendedName>
        <fullName evidence="1">Serine hydroxymethyltransferase 2</fullName>
        <shortName evidence="1">SHMT 2</shortName>
        <shortName evidence="1">Serine methylase 2</shortName>
        <ecNumber evidence="1">2.1.2.1</ecNumber>
    </recommendedName>
</protein>
<organism>
    <name type="scientific">Pseudomonas fluorescens (strain ATCC BAA-477 / NRRL B-23932 / Pf-5)</name>
    <dbReference type="NCBI Taxonomy" id="220664"/>
    <lineage>
        <taxon>Bacteria</taxon>
        <taxon>Pseudomonadati</taxon>
        <taxon>Pseudomonadota</taxon>
        <taxon>Gammaproteobacteria</taxon>
        <taxon>Pseudomonadales</taxon>
        <taxon>Pseudomonadaceae</taxon>
        <taxon>Pseudomonas</taxon>
    </lineage>
</organism>
<name>GLYA2_PSEF5</name>
<keyword id="KW-0028">Amino-acid biosynthesis</keyword>
<keyword id="KW-0963">Cytoplasm</keyword>
<keyword id="KW-0554">One-carbon metabolism</keyword>
<keyword id="KW-0663">Pyridoxal phosphate</keyword>
<keyword id="KW-0808">Transferase</keyword>
<proteinExistence type="inferred from homology"/>
<evidence type="ECO:0000255" key="1">
    <source>
        <dbReference type="HAMAP-Rule" id="MF_00051"/>
    </source>
</evidence>
<gene>
    <name evidence="1" type="primary">glyA2</name>
    <name type="ordered locus">PFL_5729</name>
</gene>
<comment type="function">
    <text evidence="1">Catalyzes the reversible interconversion of serine and glycine with tetrahydrofolate (THF) serving as the one-carbon carrier. This reaction serves as the major source of one-carbon groups required for the biosynthesis of purines, thymidylate, methionine, and other important biomolecules. Also exhibits THF-independent aldolase activity toward beta-hydroxyamino acids, producing glycine and aldehydes, via a retro-aldol mechanism.</text>
</comment>
<comment type="catalytic activity">
    <reaction evidence="1">
        <text>(6R)-5,10-methylene-5,6,7,8-tetrahydrofolate + glycine + H2O = (6S)-5,6,7,8-tetrahydrofolate + L-serine</text>
        <dbReference type="Rhea" id="RHEA:15481"/>
        <dbReference type="ChEBI" id="CHEBI:15377"/>
        <dbReference type="ChEBI" id="CHEBI:15636"/>
        <dbReference type="ChEBI" id="CHEBI:33384"/>
        <dbReference type="ChEBI" id="CHEBI:57305"/>
        <dbReference type="ChEBI" id="CHEBI:57453"/>
        <dbReference type="EC" id="2.1.2.1"/>
    </reaction>
</comment>
<comment type="cofactor">
    <cofactor evidence="1">
        <name>pyridoxal 5'-phosphate</name>
        <dbReference type="ChEBI" id="CHEBI:597326"/>
    </cofactor>
</comment>
<comment type="pathway">
    <text evidence="1">One-carbon metabolism; tetrahydrofolate interconversion.</text>
</comment>
<comment type="pathway">
    <text evidence="1">Amino-acid biosynthesis; glycine biosynthesis; glycine from L-serine: step 1/1.</text>
</comment>
<comment type="subunit">
    <text evidence="1">Homodimer.</text>
</comment>
<comment type="subcellular location">
    <subcellularLocation>
        <location evidence="1">Cytoplasm</location>
    </subcellularLocation>
</comment>
<comment type="similarity">
    <text evidence="1">Belongs to the SHMT family.</text>
</comment>